<proteinExistence type="inferred from homology"/>
<geneLocation type="mitochondrion"/>
<evidence type="ECO:0000250" key="1"/>
<evidence type="ECO:0000255" key="2"/>
<evidence type="ECO:0000305" key="3"/>
<evidence type="ECO:0000312" key="4">
    <source>
        <dbReference type="Proteomes" id="UP000001554"/>
    </source>
</evidence>
<sequence>MSPYISPLFSITMIMSVMLISSSGHWVFMWLGLELGTLAFIPILVWWHSSLEVEATVKYFIVQAMAAAVFFLGGMVSLSGDFMGGVNQLMGNIGDMMIMLAVVTKLGLAPFHYWVVDVVQGLNYIPGAVLLTWQKVPGLAVLTQLATCNNSSMLLLFGMVSALVGGLGGLGQTQMRKLLAFSSISHLGWLVVGCVAGSLLGLSYFTLYVVLSIPLFSILHMLNGGHLNQLRTGLMFNPLMSVLLGVGFLSLGGLPPFFGFFGKWLLLTHFVGQLLLGVSVVLITGTLISLFYYLRVSYLCIVVLGPQQIMSGLNWRKMQLSGLMSGLLVLNMLGLFLVGGASCLPK</sequence>
<name>NU2M_BRAFL</name>
<feature type="chain" id="PRO_0000117560" description="NADH-ubiquinone oxidoreductase chain 2">
    <location>
        <begin position="1"/>
        <end position="346"/>
    </location>
</feature>
<feature type="transmembrane region" description="Helical" evidence="2">
    <location>
        <begin position="1"/>
        <end position="21"/>
    </location>
</feature>
<feature type="transmembrane region" description="Helical" evidence="2">
    <location>
        <begin position="26"/>
        <end position="46"/>
    </location>
</feature>
<feature type="transmembrane region" description="Helical" evidence="2">
    <location>
        <begin position="60"/>
        <end position="80"/>
    </location>
</feature>
<feature type="transmembrane region" description="Helical" evidence="2">
    <location>
        <begin position="96"/>
        <end position="116"/>
    </location>
</feature>
<feature type="transmembrane region" description="Helical" evidence="2">
    <location>
        <begin position="122"/>
        <end position="142"/>
    </location>
</feature>
<feature type="transmembrane region" description="Helical" evidence="2">
    <location>
        <begin position="151"/>
        <end position="171"/>
    </location>
</feature>
<feature type="transmembrane region" description="Helical" evidence="2">
    <location>
        <begin position="178"/>
        <end position="198"/>
    </location>
</feature>
<feature type="transmembrane region" description="Helical" evidence="2">
    <location>
        <begin position="199"/>
        <end position="219"/>
    </location>
</feature>
<feature type="transmembrane region" description="Helical" evidence="2">
    <location>
        <begin position="242"/>
        <end position="262"/>
    </location>
</feature>
<feature type="transmembrane region" description="Helical" evidence="2">
    <location>
        <begin position="274"/>
        <end position="294"/>
    </location>
</feature>
<feature type="transmembrane region" description="Helical" evidence="2">
    <location>
        <begin position="320"/>
        <end position="340"/>
    </location>
</feature>
<dbReference type="EC" id="7.1.1.2"/>
<dbReference type="EMBL" id="AF098298">
    <property type="protein sequence ID" value="AAB88003.2"/>
    <property type="molecule type" value="Genomic_DNA"/>
</dbReference>
<dbReference type="RefSeq" id="NP_007769.1">
    <property type="nucleotide sequence ID" value="NC_000834.1"/>
</dbReference>
<dbReference type="SMR" id="O47434"/>
<dbReference type="FunCoup" id="O47434">
    <property type="interactions" value="10"/>
</dbReference>
<dbReference type="STRING" id="7739.O47434"/>
<dbReference type="GeneID" id="808738"/>
<dbReference type="KEGG" id="bfo:808738"/>
<dbReference type="CTD" id="4536"/>
<dbReference type="InParanoid" id="O47434"/>
<dbReference type="OMA" id="HFWVPEV"/>
<dbReference type="OrthoDB" id="4092844at2759"/>
<dbReference type="Proteomes" id="UP000001554">
    <property type="component" value="Mitochondrion MT"/>
</dbReference>
<dbReference type="GO" id="GO:0005743">
    <property type="term" value="C:mitochondrial inner membrane"/>
    <property type="evidence" value="ECO:0007669"/>
    <property type="project" value="UniProtKB-SubCell"/>
</dbReference>
<dbReference type="GO" id="GO:0045271">
    <property type="term" value="C:respiratory chain complex I"/>
    <property type="evidence" value="ECO:0000318"/>
    <property type="project" value="GO_Central"/>
</dbReference>
<dbReference type="GO" id="GO:0008137">
    <property type="term" value="F:NADH dehydrogenase (ubiquinone) activity"/>
    <property type="evidence" value="ECO:0000318"/>
    <property type="project" value="GO_Central"/>
</dbReference>
<dbReference type="GO" id="GO:0006120">
    <property type="term" value="P:mitochondrial electron transport, NADH to ubiquinone"/>
    <property type="evidence" value="ECO:0000318"/>
    <property type="project" value="GO_Central"/>
</dbReference>
<dbReference type="InterPro" id="IPR050175">
    <property type="entry name" value="Complex_I_Subunit_2"/>
</dbReference>
<dbReference type="InterPro" id="IPR003917">
    <property type="entry name" value="NADH_UbQ_OxRdtase_chain2"/>
</dbReference>
<dbReference type="InterPro" id="IPR001750">
    <property type="entry name" value="ND/Mrp_TM"/>
</dbReference>
<dbReference type="PANTHER" id="PTHR46552">
    <property type="entry name" value="NADH-UBIQUINONE OXIDOREDUCTASE CHAIN 2"/>
    <property type="match status" value="1"/>
</dbReference>
<dbReference type="PANTHER" id="PTHR46552:SF1">
    <property type="entry name" value="NADH-UBIQUINONE OXIDOREDUCTASE CHAIN 2"/>
    <property type="match status" value="1"/>
</dbReference>
<dbReference type="Pfam" id="PF00361">
    <property type="entry name" value="Proton_antipo_M"/>
    <property type="match status" value="1"/>
</dbReference>
<dbReference type="PRINTS" id="PR01436">
    <property type="entry name" value="NADHDHGNASE2"/>
</dbReference>
<accession>O47434</accession>
<reference key="1">
    <citation type="journal article" date="1999" name="Mol. Biol. Evol.">
        <title>Complete sequence, gene arrangement, and genetic code of mitochondrial DNA of the cephalochordate Branchiostoma floridae (Amphioxus).</title>
        <authorList>
            <person name="Boore J.L."/>
            <person name="Daehler L.L."/>
            <person name="Brown W.M."/>
        </authorList>
    </citation>
    <scope>NUCLEOTIDE SEQUENCE [LARGE SCALE GENOMIC DNA]</scope>
    <source>
        <strain evidence="4">S238N-H82</strain>
    </source>
</reference>
<keyword id="KW-0249">Electron transport</keyword>
<keyword id="KW-0472">Membrane</keyword>
<keyword id="KW-0496">Mitochondrion</keyword>
<keyword id="KW-0999">Mitochondrion inner membrane</keyword>
<keyword id="KW-0520">NAD</keyword>
<keyword id="KW-1185">Reference proteome</keyword>
<keyword id="KW-0679">Respiratory chain</keyword>
<keyword id="KW-1278">Translocase</keyword>
<keyword id="KW-0812">Transmembrane</keyword>
<keyword id="KW-1133">Transmembrane helix</keyword>
<keyword id="KW-0813">Transport</keyword>
<keyword id="KW-0830">Ubiquinone</keyword>
<comment type="function">
    <text evidence="1">Core subunit of the mitochondrial membrane respiratory chain NADH dehydrogenase (Complex I) that is believed to belong to the minimal assembly required for catalysis. Complex I functions in the transfer of electrons from NADH to the respiratory chain. The immediate electron acceptor for the enzyme is believed to be ubiquinone (By similarity).</text>
</comment>
<comment type="catalytic activity">
    <reaction>
        <text>a ubiquinone + NADH + 5 H(+)(in) = a ubiquinol + NAD(+) + 4 H(+)(out)</text>
        <dbReference type="Rhea" id="RHEA:29091"/>
        <dbReference type="Rhea" id="RHEA-COMP:9565"/>
        <dbReference type="Rhea" id="RHEA-COMP:9566"/>
        <dbReference type="ChEBI" id="CHEBI:15378"/>
        <dbReference type="ChEBI" id="CHEBI:16389"/>
        <dbReference type="ChEBI" id="CHEBI:17976"/>
        <dbReference type="ChEBI" id="CHEBI:57540"/>
        <dbReference type="ChEBI" id="CHEBI:57945"/>
        <dbReference type="EC" id="7.1.1.2"/>
    </reaction>
</comment>
<comment type="subcellular location">
    <subcellularLocation>
        <location>Mitochondrion inner membrane</location>
        <topology>Multi-pass membrane protein</topology>
    </subcellularLocation>
</comment>
<comment type="similarity">
    <text evidence="3">Belongs to the complex I subunit 2 family.</text>
</comment>
<gene>
    <name type="primary">ND2</name>
    <name type="synonym">NAD2</name>
    <name type="synonym">NADH2</name>
</gene>
<protein>
    <recommendedName>
        <fullName>NADH-ubiquinone oxidoreductase chain 2</fullName>
        <ecNumber>7.1.1.2</ecNumber>
    </recommendedName>
    <alternativeName>
        <fullName>NADH dehydrogenase subunit 2</fullName>
    </alternativeName>
</protein>
<organism>
    <name type="scientific">Branchiostoma floridae</name>
    <name type="common">Florida lancelet</name>
    <name type="synonym">Amphioxus</name>
    <dbReference type="NCBI Taxonomy" id="7739"/>
    <lineage>
        <taxon>Eukaryota</taxon>
        <taxon>Metazoa</taxon>
        <taxon>Chordata</taxon>
        <taxon>Cephalochordata</taxon>
        <taxon>Leptocardii</taxon>
        <taxon>Amphioxiformes</taxon>
        <taxon>Branchiostomatidae</taxon>
        <taxon>Branchiostoma</taxon>
    </lineage>
</organism>